<dbReference type="EC" id="2.3.2.27" evidence="7 12"/>
<dbReference type="EMBL" id="D83077">
    <property type="protein sequence ID" value="BAA11769.1"/>
    <property type="molecule type" value="mRNA"/>
</dbReference>
<dbReference type="EMBL" id="D84294">
    <property type="protein sequence ID" value="BAA12301.1"/>
    <property type="molecule type" value="mRNA"/>
</dbReference>
<dbReference type="EMBL" id="D84295">
    <property type="protein sequence ID" value="BAA12302.1"/>
    <property type="molecule type" value="mRNA"/>
</dbReference>
<dbReference type="EMBL" id="D84296">
    <property type="protein sequence ID" value="BAA12303.1"/>
    <property type="molecule type" value="mRNA"/>
</dbReference>
<dbReference type="EMBL" id="AP001429">
    <property type="status" value="NOT_ANNOTATED_CDS"/>
    <property type="molecule type" value="Genomic_DNA"/>
</dbReference>
<dbReference type="EMBL" id="AP001432">
    <property type="status" value="NOT_ANNOTATED_CDS"/>
    <property type="molecule type" value="Genomic_DNA"/>
</dbReference>
<dbReference type="EMBL" id="CH471079">
    <property type="protein sequence ID" value="EAX09716.1"/>
    <property type="molecule type" value="Genomic_DNA"/>
</dbReference>
<dbReference type="EMBL" id="CH471079">
    <property type="protein sequence ID" value="EAX09717.1"/>
    <property type="molecule type" value="Genomic_DNA"/>
</dbReference>
<dbReference type="EMBL" id="CH471079">
    <property type="protein sequence ID" value="EAX09718.1"/>
    <property type="molecule type" value="Genomic_DNA"/>
</dbReference>
<dbReference type="EMBL" id="CH471079">
    <property type="protein sequence ID" value="EAX09719.1"/>
    <property type="molecule type" value="Genomic_DNA"/>
</dbReference>
<dbReference type="EMBL" id="CH471079">
    <property type="protein sequence ID" value="EAX09720.1"/>
    <property type="molecule type" value="Genomic_DNA"/>
</dbReference>
<dbReference type="EMBL" id="CH471079">
    <property type="protein sequence ID" value="EAX09721.1"/>
    <property type="molecule type" value="Genomic_DNA"/>
</dbReference>
<dbReference type="EMBL" id="CH471079">
    <property type="protein sequence ID" value="EAX09722.1"/>
    <property type="molecule type" value="Genomic_DNA"/>
</dbReference>
<dbReference type="EMBL" id="CH471079">
    <property type="protein sequence ID" value="EAX09723.1"/>
    <property type="molecule type" value="Genomic_DNA"/>
</dbReference>
<dbReference type="EMBL" id="BC063033">
    <property type="protein sequence ID" value="AAH63033.1"/>
    <property type="status" value="ALT_SEQ"/>
    <property type="molecule type" value="mRNA"/>
</dbReference>
<dbReference type="EMBL" id="BC092466">
    <property type="protein sequence ID" value="AAH92466.1"/>
    <property type="status" value="ALT_SEQ"/>
    <property type="molecule type" value="mRNA"/>
</dbReference>
<dbReference type="EMBL" id="BC137345">
    <property type="protein sequence ID" value="AAI37346.1"/>
    <property type="molecule type" value="mRNA"/>
</dbReference>
<dbReference type="EMBL" id="AK291992">
    <property type="protein sequence ID" value="BAF84681.1"/>
    <property type="molecule type" value="mRNA"/>
</dbReference>
<dbReference type="EMBL" id="D83327">
    <property type="protein sequence ID" value="BAA23666.1"/>
    <property type="molecule type" value="mRNA"/>
</dbReference>
<dbReference type="EMBL" id="AJ001866">
    <property type="protein sequence ID" value="CAA05057.1"/>
    <property type="molecule type" value="mRNA"/>
</dbReference>
<dbReference type="CCDS" id="CCDS13651.1">
    <molecule id="P53804-1"/>
</dbReference>
<dbReference type="CCDS" id="CCDS93096.1">
    <molecule id="P53804-3"/>
</dbReference>
<dbReference type="PIR" id="JC5020">
    <property type="entry name" value="JC5020"/>
</dbReference>
<dbReference type="RefSeq" id="NP_001001894.1">
    <molecule id="P53804-1"/>
    <property type="nucleotide sequence ID" value="NM_001001894.3"/>
</dbReference>
<dbReference type="RefSeq" id="NP_001307633.1">
    <property type="nucleotide sequence ID" value="NM_001320704.1"/>
</dbReference>
<dbReference type="RefSeq" id="NP_001317610.1">
    <molecule id="P53804-3"/>
    <property type="nucleotide sequence ID" value="NM_001330681.2"/>
</dbReference>
<dbReference type="RefSeq" id="NP_001317611.1">
    <molecule id="P53804-3"/>
    <property type="nucleotide sequence ID" value="NM_001330682.2"/>
</dbReference>
<dbReference type="RefSeq" id="NP_001317612.1">
    <molecule id="P53804-1"/>
    <property type="nucleotide sequence ID" value="NM_001330683.2"/>
</dbReference>
<dbReference type="RefSeq" id="NP_001340865.1">
    <molecule id="P53804-3"/>
    <property type="nucleotide sequence ID" value="NM_001353936.2"/>
</dbReference>
<dbReference type="RefSeq" id="NP_003307.3">
    <molecule id="P53804-1"/>
    <property type="nucleotide sequence ID" value="NM_003316.3"/>
</dbReference>
<dbReference type="RefSeq" id="XP_011528042.1">
    <property type="nucleotide sequence ID" value="XM_011529740.2"/>
</dbReference>
<dbReference type="BioGRID" id="113118">
    <property type="interactions" value="130"/>
</dbReference>
<dbReference type="ELM" id="P53804"/>
<dbReference type="FunCoup" id="P53804">
    <property type="interactions" value="3414"/>
</dbReference>
<dbReference type="IntAct" id="P53804">
    <property type="interactions" value="110"/>
</dbReference>
<dbReference type="MINT" id="P53804"/>
<dbReference type="STRING" id="9606.ENSP00000381981"/>
<dbReference type="GlyGen" id="P53804">
    <property type="glycosylation" value="1 site"/>
</dbReference>
<dbReference type="iPTMnet" id="P53804"/>
<dbReference type="PhosphoSitePlus" id="P53804"/>
<dbReference type="BioMuta" id="TTC3"/>
<dbReference type="DMDM" id="313104040"/>
<dbReference type="jPOST" id="P53804"/>
<dbReference type="MassIVE" id="P53804"/>
<dbReference type="PaxDb" id="9606-ENSP00000381981"/>
<dbReference type="PeptideAtlas" id="P53804"/>
<dbReference type="ProteomicsDB" id="56623">
    <molecule id="P53804-1"/>
</dbReference>
<dbReference type="ProteomicsDB" id="56624">
    <molecule id="P53804-2"/>
</dbReference>
<dbReference type="ProteomicsDB" id="56625">
    <molecule id="P53804-3"/>
</dbReference>
<dbReference type="Pumba" id="P53804"/>
<dbReference type="Antibodypedia" id="8442">
    <property type="antibodies" value="70 antibodies from 19 providers"/>
</dbReference>
<dbReference type="DNASU" id="7267"/>
<dbReference type="Ensembl" id="ENST00000354749.6">
    <molecule id="P53804-1"/>
    <property type="protein sequence ID" value="ENSP00000346791.2"/>
    <property type="gene ID" value="ENSG00000182670.14"/>
</dbReference>
<dbReference type="Ensembl" id="ENST00000399017.6">
    <molecule id="P53804-1"/>
    <property type="protein sequence ID" value="ENSP00000381981.2"/>
    <property type="gene ID" value="ENSG00000182670.14"/>
</dbReference>
<dbReference type="Ensembl" id="ENST00000418766.6">
    <molecule id="P53804-1"/>
    <property type="protein sequence ID" value="ENSP00000403943.2"/>
    <property type="gene ID" value="ENSG00000182670.14"/>
</dbReference>
<dbReference type="Ensembl" id="ENST00000450533.6">
    <molecule id="P53804-1"/>
    <property type="protein sequence ID" value="ENSP00000408456.2"/>
    <property type="gene ID" value="ENSG00000182670.14"/>
</dbReference>
<dbReference type="Ensembl" id="ENST00000463216.6">
    <molecule id="P53804-3"/>
    <property type="protein sequence ID" value="ENSP00000512893.1"/>
    <property type="gene ID" value="ENSG00000182670.14"/>
</dbReference>
<dbReference type="Ensembl" id="ENST00000492275.6">
    <molecule id="P53804-3"/>
    <property type="protein sequence ID" value="ENSP00000512889.1"/>
    <property type="gene ID" value="ENSG00000182670.14"/>
</dbReference>
<dbReference type="GeneID" id="7267"/>
<dbReference type="KEGG" id="hsa:7267"/>
<dbReference type="MANE-Select" id="ENST00000418766.6">
    <property type="protein sequence ID" value="ENSP00000403943.2"/>
    <property type="RefSeq nucleotide sequence ID" value="NM_001330683.2"/>
    <property type="RefSeq protein sequence ID" value="NP_001317612.1"/>
</dbReference>
<dbReference type="UCSC" id="uc002yvz.4">
    <molecule id="P53804-1"/>
    <property type="organism name" value="human"/>
</dbReference>
<dbReference type="AGR" id="HGNC:12393"/>
<dbReference type="CTD" id="7267"/>
<dbReference type="DisGeNET" id="7267"/>
<dbReference type="GeneCards" id="TTC3"/>
<dbReference type="HGNC" id="HGNC:12393">
    <property type="gene designation" value="TTC3"/>
</dbReference>
<dbReference type="HPA" id="ENSG00000182670">
    <property type="expression patterns" value="Low tissue specificity"/>
</dbReference>
<dbReference type="MIM" id="602259">
    <property type="type" value="gene"/>
</dbReference>
<dbReference type="neXtProt" id="NX_P53804"/>
<dbReference type="OpenTargets" id="ENSG00000182670"/>
<dbReference type="PharmGKB" id="PA37058"/>
<dbReference type="VEuPathDB" id="HostDB:ENSG00000182670"/>
<dbReference type="eggNOG" id="KOG0800">
    <property type="taxonomic scope" value="Eukaryota"/>
</dbReference>
<dbReference type="GeneTree" id="ENSGT00940000154465"/>
<dbReference type="HOGENOM" id="CLU_001829_1_0_1"/>
<dbReference type="InParanoid" id="P53804"/>
<dbReference type="OMA" id="CEDVRAK"/>
<dbReference type="OrthoDB" id="8062037at2759"/>
<dbReference type="PAN-GO" id="P53804">
    <property type="GO annotations" value="2 GO annotations based on evolutionary models"/>
</dbReference>
<dbReference type="PhylomeDB" id="P53804"/>
<dbReference type="TreeFam" id="TF333981"/>
<dbReference type="PathwayCommons" id="P53804"/>
<dbReference type="SignaLink" id="P53804"/>
<dbReference type="SIGNOR" id="P53804"/>
<dbReference type="UniPathway" id="UPA00143"/>
<dbReference type="BioGRID-ORCS" id="7267">
    <property type="hits" value="10 hits in 1195 CRISPR screens"/>
</dbReference>
<dbReference type="ChiTaRS" id="TTC3">
    <property type="organism name" value="human"/>
</dbReference>
<dbReference type="GeneWiki" id="TTC3"/>
<dbReference type="GenomeRNAi" id="7267"/>
<dbReference type="Pharos" id="P53804">
    <property type="development level" value="Tbio"/>
</dbReference>
<dbReference type="PRO" id="PR:P53804"/>
<dbReference type="Proteomes" id="UP000005640">
    <property type="component" value="Chromosome 21"/>
</dbReference>
<dbReference type="RNAct" id="P53804">
    <property type="molecule type" value="protein"/>
</dbReference>
<dbReference type="Bgee" id="ENSG00000182670">
    <property type="expression patterns" value="Expressed in cortical plate and 210 other cell types or tissues"/>
</dbReference>
<dbReference type="ExpressionAtlas" id="P53804">
    <property type="expression patterns" value="baseline and differential"/>
</dbReference>
<dbReference type="GO" id="GO:0005829">
    <property type="term" value="C:cytosol"/>
    <property type="evidence" value="ECO:0000314"/>
    <property type="project" value="HPA"/>
</dbReference>
<dbReference type="GO" id="GO:0005794">
    <property type="term" value="C:Golgi apparatus"/>
    <property type="evidence" value="ECO:0007669"/>
    <property type="project" value="UniProtKB-SubCell"/>
</dbReference>
<dbReference type="GO" id="GO:0005730">
    <property type="term" value="C:nucleolus"/>
    <property type="evidence" value="ECO:0000314"/>
    <property type="project" value="HPA"/>
</dbReference>
<dbReference type="GO" id="GO:0005654">
    <property type="term" value="C:nucleoplasm"/>
    <property type="evidence" value="ECO:0000314"/>
    <property type="project" value="HPA"/>
</dbReference>
<dbReference type="GO" id="GO:0005634">
    <property type="term" value="C:nucleus"/>
    <property type="evidence" value="ECO:0000314"/>
    <property type="project" value="UniProtKB"/>
</dbReference>
<dbReference type="GO" id="GO:0004842">
    <property type="term" value="F:ubiquitin-protein transferase activity"/>
    <property type="evidence" value="ECO:0000314"/>
    <property type="project" value="UniProtKB"/>
</dbReference>
<dbReference type="GO" id="GO:0008270">
    <property type="term" value="F:zinc ion binding"/>
    <property type="evidence" value="ECO:0007669"/>
    <property type="project" value="UniProtKB-KW"/>
</dbReference>
<dbReference type="GO" id="GO:0070936">
    <property type="term" value="P:protein K48-linked ubiquitination"/>
    <property type="evidence" value="ECO:0000314"/>
    <property type="project" value="UniProtKB"/>
</dbReference>
<dbReference type="GO" id="GO:0006511">
    <property type="term" value="P:ubiquitin-dependent protein catabolic process"/>
    <property type="evidence" value="ECO:0000314"/>
    <property type="project" value="UniProtKB"/>
</dbReference>
<dbReference type="CDD" id="cd16481">
    <property type="entry name" value="RING-H2_TTC3"/>
    <property type="match status" value="1"/>
</dbReference>
<dbReference type="FunFam" id="1.25.40.10:FF:000370">
    <property type="entry name" value="E3 ubiquitin-protein ligase TTC3"/>
    <property type="match status" value="1"/>
</dbReference>
<dbReference type="FunFam" id="1.25.40.10:FF:000143">
    <property type="entry name" value="E3 ubiquitin-protein ligase TTC3 isoform X2"/>
    <property type="match status" value="1"/>
</dbReference>
<dbReference type="FunFam" id="3.30.40.10:FF:000529">
    <property type="entry name" value="Tetratricopeptide repeat domain 3"/>
    <property type="match status" value="1"/>
</dbReference>
<dbReference type="Gene3D" id="1.10.533.10">
    <property type="entry name" value="Death Domain, Fas"/>
    <property type="match status" value="1"/>
</dbReference>
<dbReference type="Gene3D" id="1.25.40.10">
    <property type="entry name" value="Tetratricopeptide repeat domain"/>
    <property type="match status" value="2"/>
</dbReference>
<dbReference type="Gene3D" id="3.30.40.10">
    <property type="entry name" value="Zinc/RING finger domain, C3HC4 (zinc finger)"/>
    <property type="match status" value="1"/>
</dbReference>
<dbReference type="InterPro" id="IPR011029">
    <property type="entry name" value="DEATH-like_dom_sf"/>
</dbReference>
<dbReference type="InterPro" id="IPR011990">
    <property type="entry name" value="TPR-like_helical_dom_sf"/>
</dbReference>
<dbReference type="InterPro" id="IPR019734">
    <property type="entry name" value="TPR_rpt"/>
</dbReference>
<dbReference type="InterPro" id="IPR056872">
    <property type="entry name" value="TTC3/DZIP3-like_helical"/>
</dbReference>
<dbReference type="InterPro" id="IPR056870">
    <property type="entry name" value="TTC3/DZIP3/RBM44-like_helical"/>
</dbReference>
<dbReference type="InterPro" id="IPR043866">
    <property type="entry name" value="TTC3/DZIP3_dom"/>
</dbReference>
<dbReference type="InterPro" id="IPR056871">
    <property type="entry name" value="wHTH_TTC3"/>
</dbReference>
<dbReference type="InterPro" id="IPR001841">
    <property type="entry name" value="Znf_RING"/>
</dbReference>
<dbReference type="InterPro" id="IPR013083">
    <property type="entry name" value="Znf_RING/FYVE/PHD"/>
</dbReference>
<dbReference type="PANTHER" id="PTHR17550">
    <property type="entry name" value="E3 UBIQUITIN-PROTEIN LIGASE TTC3"/>
    <property type="match status" value="1"/>
</dbReference>
<dbReference type="PANTHER" id="PTHR17550:SF6">
    <property type="entry name" value="E3 UBIQUITIN-PROTEIN LIGASE TTC3"/>
    <property type="match status" value="1"/>
</dbReference>
<dbReference type="Pfam" id="PF24525">
    <property type="entry name" value="TTC3"/>
    <property type="match status" value="1"/>
</dbReference>
<dbReference type="Pfam" id="PF24905">
    <property type="entry name" value="TTC3_9th"/>
    <property type="match status" value="1"/>
</dbReference>
<dbReference type="Pfam" id="PF19179">
    <property type="entry name" value="TTC3_DZIP3_dom"/>
    <property type="match status" value="1"/>
</dbReference>
<dbReference type="Pfam" id="PF24812">
    <property type="entry name" value="wHTH_TTC3"/>
    <property type="match status" value="1"/>
</dbReference>
<dbReference type="Pfam" id="PF13639">
    <property type="entry name" value="zf-RING_2"/>
    <property type="match status" value="1"/>
</dbReference>
<dbReference type="SMART" id="SM00184">
    <property type="entry name" value="RING"/>
    <property type="match status" value="1"/>
</dbReference>
<dbReference type="SMART" id="SM00028">
    <property type="entry name" value="TPR"/>
    <property type="match status" value="4"/>
</dbReference>
<dbReference type="SUPFAM" id="SSF57850">
    <property type="entry name" value="RING/U-box"/>
    <property type="match status" value="1"/>
</dbReference>
<dbReference type="SUPFAM" id="SSF48452">
    <property type="entry name" value="TPR-like"/>
    <property type="match status" value="2"/>
</dbReference>
<dbReference type="PROSITE" id="PS50005">
    <property type="entry name" value="TPR"/>
    <property type="match status" value="2"/>
</dbReference>
<dbReference type="PROSITE" id="PS50293">
    <property type="entry name" value="TPR_REGION"/>
    <property type="match status" value="2"/>
</dbReference>
<dbReference type="PROSITE" id="PS50089">
    <property type="entry name" value="ZF_RING_2"/>
    <property type="match status" value="1"/>
</dbReference>
<evidence type="ECO:0000250" key="1">
    <source>
        <dbReference type="UniProtKB" id="D3ZSP7"/>
    </source>
</evidence>
<evidence type="ECO:0000250" key="2">
    <source>
        <dbReference type="UniProtKB" id="O88196"/>
    </source>
</evidence>
<evidence type="ECO:0000255" key="3">
    <source>
        <dbReference type="PROSITE-ProRule" id="PRU00175"/>
    </source>
</evidence>
<evidence type="ECO:0000256" key="4">
    <source>
        <dbReference type="SAM" id="MobiDB-lite"/>
    </source>
</evidence>
<evidence type="ECO:0000269" key="5">
    <source>
    </source>
</evidence>
<evidence type="ECO:0000269" key="6">
    <source>
    </source>
</evidence>
<evidence type="ECO:0000269" key="7">
    <source>
    </source>
</evidence>
<evidence type="ECO:0000269" key="8">
    <source>
    </source>
</evidence>
<evidence type="ECO:0000269" key="9">
    <source>
    </source>
</evidence>
<evidence type="ECO:0000269" key="10">
    <source>
    </source>
</evidence>
<evidence type="ECO:0000269" key="11">
    <source>
    </source>
</evidence>
<evidence type="ECO:0000269" key="12">
    <source>
    </source>
</evidence>
<evidence type="ECO:0000269" key="13">
    <source>
    </source>
</evidence>
<evidence type="ECO:0000269" key="14">
    <source>
    </source>
</evidence>
<evidence type="ECO:0000269" key="15">
    <source>
    </source>
</evidence>
<evidence type="ECO:0000303" key="16">
    <source>
    </source>
</evidence>
<evidence type="ECO:0000305" key="17"/>
<protein>
    <recommendedName>
        <fullName>E3 ubiquitin-protein ligase TTC3</fullName>
        <ecNumber evidence="7 12">2.3.2.27</ecNumber>
    </recommendedName>
    <alternativeName>
        <fullName>Protein DCRR1</fullName>
    </alternativeName>
    <alternativeName>
        <fullName>RING finger protein 105</fullName>
    </alternativeName>
    <alternativeName>
        <fullName evidence="17">RING-type E3 ubiquitin transferase TTC3</fullName>
    </alternativeName>
    <alternativeName>
        <fullName>TPR repeat protein D</fullName>
    </alternativeName>
    <alternativeName>
        <fullName>Tetratricopeptide repeat protein 3</fullName>
        <shortName>TPR repeat protein 3</shortName>
    </alternativeName>
</protein>
<proteinExistence type="evidence at protein level"/>
<accession>P53804</accession>
<accession>A8K7H7</accession>
<accession>B2RPA7</accession>
<accession>D3DSG9</accession>
<accession>D3DSH2</accession>
<accession>D3DSH3</accession>
<accession>O60767</accession>
<accession>P78476</accession>
<accession>P78477</accession>
<accession>Q569I2</accession>
<accession>Q6P578</accession>
<accession>Q9UEK4</accession>
<organism>
    <name type="scientific">Homo sapiens</name>
    <name type="common">Human</name>
    <dbReference type="NCBI Taxonomy" id="9606"/>
    <lineage>
        <taxon>Eukaryota</taxon>
        <taxon>Metazoa</taxon>
        <taxon>Chordata</taxon>
        <taxon>Craniata</taxon>
        <taxon>Vertebrata</taxon>
        <taxon>Euteleostomi</taxon>
        <taxon>Mammalia</taxon>
        <taxon>Eutheria</taxon>
        <taxon>Euarchontoglires</taxon>
        <taxon>Primates</taxon>
        <taxon>Haplorrhini</taxon>
        <taxon>Catarrhini</taxon>
        <taxon>Hominidae</taxon>
        <taxon>Homo</taxon>
    </lineage>
</organism>
<comment type="function">
    <text evidence="6 7 8 11 12">E3 ubiquitin-protein ligase which catalyzes the formation of 'Lys-48'-polyubiquitin chains (PubMed:20059950, PubMed:30696809). Mediates the ubiquitination and subsequent degradation of phosphorylated Akt (AKT1, AKT2 and AKT3) in the nucleus (PubMed:20059950). Acts as a terminal regulator of Akt signaling after activation; its phosphorylation by Akt, which is a prerequisite for ubiquitin ligase activity, suggests the existence of a regulation mechanism required to control Akt levels after activation (PubMed:20059950). Positively regulates TGFB1-induced epithelial-mesenchymal transition and myofibroblast differentiation by mediating the ubiquitination and subsequent degradation of SMURF2 (PubMed:30696809). Regulates neuronal differentiation by regulating actin remodeling and Golgi organization via a signaling cascade involving RHOA, CIT and ROCK (PubMed:17488780, PubMed:24695496). Inhibits cell proliferation (PubMed:30203323).</text>
</comment>
<comment type="catalytic activity">
    <reaction evidence="7 12">
        <text>S-ubiquitinyl-[E2 ubiquitin-conjugating enzyme]-L-cysteine + [acceptor protein]-L-lysine = [E2 ubiquitin-conjugating enzyme]-L-cysteine + N(6)-ubiquitinyl-[acceptor protein]-L-lysine.</text>
        <dbReference type="EC" id="2.3.2.27"/>
    </reaction>
</comment>
<comment type="pathway">
    <text evidence="7 12">Protein modification; protein ubiquitination.</text>
</comment>
<comment type="subunit">
    <text evidence="6 7 10 12">Interacts (when phosphorylated on Ser-378) with AKT1, AKT2 and AKT3 (when phosphorylated) (PubMed:20059950). Interacts with CIT (PubMed:17488780). Interacts with POLG (PubMed:29290964). Interacts with HSP70 (PubMed:29290964). Interacts with SMURF2 (PubMed:30696809).</text>
</comment>
<comment type="interaction">
    <interactant intactId="EBI-2681313">
        <id>P53804</id>
    </interactant>
    <interactant intactId="EBI-296087">
        <id>P31749</id>
        <label>AKT1</label>
    </interactant>
    <organismsDiffer>false</organismsDiffer>
    <experiments>4</experiments>
</comment>
<comment type="interaction">
    <interactant intactId="EBI-2681313">
        <id>P53804</id>
    </interactant>
    <interactant intactId="EBI-296058">
        <id>P31751</id>
        <label>AKT2</label>
    </interactant>
    <organismsDiffer>false</organismsDiffer>
    <experiments>5</experiments>
</comment>
<comment type="interaction">
    <interactant intactId="EBI-2681313">
        <id>P53804</id>
    </interactant>
    <interactant intactId="EBI-296115">
        <id>Q9Y243</id>
        <label>AKT3</label>
    </interactant>
    <organismsDiffer>false</organismsDiffer>
    <experiments>2</experiments>
</comment>
<comment type="interaction">
    <interactant intactId="EBI-2681313">
        <id>P53804</id>
    </interactant>
    <interactant intactId="EBI-396727">
        <id>Q9HAU4</id>
        <label>SMURF2</label>
    </interactant>
    <organismsDiffer>false</organismsDiffer>
    <experiments>2</experiments>
</comment>
<comment type="subcellular location">
    <subcellularLocation>
        <location evidence="7 11">Nucleus</location>
    </subcellularLocation>
    <subcellularLocation>
        <location evidence="11">Cytoplasm</location>
    </subcellularLocation>
    <subcellularLocation>
        <location evidence="1">Golgi apparatus</location>
    </subcellularLocation>
    <text evidence="11">Nuclear localization may be dependent on the proteolytic cleavage of full length protein in the cytoplasm (PubMed:30203323). This cleavage may reveal an N-terminal nuclear localization signal, allowing N-terminal fragments to enter the nucleus (PubMed:30203323).</text>
</comment>
<comment type="alternative products">
    <event type="alternative splicing"/>
    <isoform>
        <id>P53804-1</id>
        <name>TPRDI</name>
        <sequence type="displayed"/>
    </isoform>
    <isoform>
        <id>P53804-2</id>
        <name>TPRDII</name>
        <sequence type="described" ref="VSP_006554"/>
    </isoform>
    <isoform>
        <id>P53804-3</id>
        <name>TPRDIII</name>
        <sequence type="described" ref="VSP_006555"/>
    </isoform>
</comment>
<comment type="tissue specificity">
    <text>Found in all tissues examined.</text>
</comment>
<comment type="induction">
    <text evidence="12">Up-regulated by TGFB1 signaling.</text>
</comment>
<comment type="PTM">
    <text evidence="7">Phosphorylation on Ser-378 by Akt is required for ubiquitin ligase activity.</text>
</comment>
<comment type="PTM">
    <text evidence="11">Proteolytically cleaved into differently sized N- and C-terminal fragments.</text>
</comment>
<comment type="sequence caution" evidence="17">
    <conflict type="miscellaneous discrepancy">
        <sequence resource="EMBL-CDS" id="AAH63033"/>
    </conflict>
    <text>Contaminating sequence. Potential poly-A sequence.</text>
</comment>
<comment type="sequence caution" evidence="17">
    <conflict type="miscellaneous discrepancy">
        <sequence resource="EMBL-CDS" id="AAH92466"/>
    </conflict>
    <text>Contaminating sequence. Potential poly-A sequence.</text>
</comment>
<feature type="chain" id="PRO_0000106378" description="E3 ubiquitin-protein ligase TTC3">
    <location>
        <begin position="1"/>
        <end position="2025"/>
    </location>
</feature>
<feature type="repeat" description="TPR 1">
    <location>
        <begin position="231"/>
        <end position="264"/>
    </location>
</feature>
<feature type="repeat" description="TPR 2">
    <location>
        <begin position="266"/>
        <end position="298"/>
    </location>
</feature>
<feature type="repeat" description="TPR 3">
    <location>
        <begin position="536"/>
        <end position="572"/>
    </location>
</feature>
<feature type="repeat" description="TPR 4">
    <location>
        <begin position="576"/>
        <end position="609"/>
    </location>
</feature>
<feature type="zinc finger region" description="RING-type" evidence="3">
    <location>
        <begin position="1957"/>
        <end position="1997"/>
    </location>
</feature>
<feature type="region of interest" description="Interaction with POLG" evidence="10">
    <location>
        <begin position="1"/>
        <end position="230"/>
    </location>
</feature>
<feature type="region of interest" description="Disordered" evidence="4">
    <location>
        <begin position="423"/>
        <end position="458"/>
    </location>
</feature>
<feature type="region of interest" description="Disordered" evidence="4">
    <location>
        <begin position="786"/>
        <end position="805"/>
    </location>
</feature>
<feature type="region of interest" description="Disordered" evidence="4">
    <location>
        <begin position="1012"/>
        <end position="1068"/>
    </location>
</feature>
<feature type="region of interest" description="Disordered" evidence="4">
    <location>
        <begin position="1215"/>
        <end position="1295"/>
    </location>
</feature>
<feature type="region of interest" description="Disordered" evidence="4">
    <location>
        <begin position="1773"/>
        <end position="1842"/>
    </location>
</feature>
<feature type="region of interest" description="Disordered" evidence="4">
    <location>
        <begin position="1894"/>
        <end position="1944"/>
    </location>
</feature>
<feature type="region of interest" description="Disordered" evidence="4">
    <location>
        <begin position="2004"/>
        <end position="2025"/>
    </location>
</feature>
<feature type="compositionally biased region" description="Basic and acidic residues" evidence="4">
    <location>
        <begin position="793"/>
        <end position="805"/>
    </location>
</feature>
<feature type="compositionally biased region" description="Basic residues" evidence="4">
    <location>
        <begin position="1019"/>
        <end position="1029"/>
    </location>
</feature>
<feature type="compositionally biased region" description="Polar residues" evidence="4">
    <location>
        <begin position="1038"/>
        <end position="1052"/>
    </location>
</feature>
<feature type="compositionally biased region" description="Basic and acidic residues" evidence="4">
    <location>
        <begin position="1894"/>
        <end position="1912"/>
    </location>
</feature>
<feature type="compositionally biased region" description="Polar residues" evidence="4">
    <location>
        <begin position="1913"/>
        <end position="1928"/>
    </location>
</feature>
<feature type="compositionally biased region" description="Polar residues" evidence="4">
    <location>
        <begin position="2013"/>
        <end position="2025"/>
    </location>
</feature>
<feature type="modified residue" description="Phosphoserine; by PKB/AKT2" evidence="7">
    <location>
        <position position="378"/>
    </location>
</feature>
<feature type="modified residue" description="Phosphoserine" evidence="2">
    <location>
        <position position="1009"/>
    </location>
</feature>
<feature type="modified residue" description="Phosphoserine" evidence="2">
    <location>
        <position position="1061"/>
    </location>
</feature>
<feature type="splice variant" id="VSP_006555" description="In isoform TPRDIII." evidence="16">
    <location>
        <begin position="1"/>
        <end position="310"/>
    </location>
</feature>
<feature type="splice variant" id="VSP_006554" description="In isoform TPRDII." evidence="16">
    <location>
        <begin position="1"/>
        <end position="233"/>
    </location>
</feature>
<feature type="sequence variant" id="VAR_020312" description="In dbSNP:rs1053808." evidence="15">
    <original>M</original>
    <variation>T</variation>
    <location>
        <position position="840"/>
    </location>
</feature>
<feature type="sequence variant" id="VAR_082645" description="In an extended family with high risk of late-onset Alzheimer Disease; dbSNP:rs377155188." evidence="9">
    <original>S</original>
    <variation>C</variation>
    <location>
        <position position="1038"/>
    </location>
</feature>
<feature type="sequence variant" id="VAR_044428" description="In dbSNP:rs1053840.">
    <original>P</original>
    <variation>S</variation>
    <location>
        <position position="1154"/>
    </location>
</feature>
<feature type="sequence variant" id="VAR_035868" description="In a breast cancer sample; somatic mutation." evidence="5">
    <original>K</original>
    <variation>M</variation>
    <location>
        <position position="1289"/>
    </location>
</feature>
<feature type="sequence variant" id="VAR_024676" description="In dbSNP:rs1053966." evidence="13 14">
    <original>D</original>
    <variation>H</variation>
    <location>
        <position position="1751"/>
    </location>
</feature>
<feature type="mutagenesis site" description="Abolishes phosphorylation by Akt and impairs ubiquitin ligase activity on Akt." evidence="7">
    <original>S</original>
    <variation>A</variation>
    <location>
        <position position="378"/>
    </location>
</feature>
<feature type="sequence conflict" description="In Ref. 5; AAH92466." evidence="17" ref="5">
    <original>F</original>
    <variation>Y</variation>
    <location>
        <position position="9"/>
    </location>
</feature>
<feature type="sequence conflict" description="In Ref. 8; CAA05057." evidence="17" ref="8">
    <original>N</original>
    <variation>D</variation>
    <location>
        <position position="121"/>
    </location>
</feature>
<feature type="sequence conflict" description="In Ref. 8; CAA05057." evidence="17" ref="8">
    <original>K</original>
    <variation>R</variation>
    <location>
        <position position="139"/>
    </location>
</feature>
<feature type="sequence conflict" description="In Ref. 8; CAA05057." evidence="17" ref="8">
    <original>E</original>
    <variation>G</variation>
    <location>
        <position position="232"/>
    </location>
</feature>
<feature type="sequence conflict" description="In Ref. 8; CAA05057." evidence="17" ref="8">
    <original>L</original>
    <variation>P</variation>
    <location>
        <position position="276"/>
    </location>
</feature>
<feature type="sequence conflict" description="In Ref. 5; AAH63033." evidence="17" ref="5">
    <original>K</original>
    <variation>Q</variation>
    <location>
        <position position="437"/>
    </location>
</feature>
<feature type="sequence conflict" description="In Ref. 7; BAA23666." evidence="17" ref="7">
    <original>Q</original>
    <variation>P</variation>
    <location>
        <position position="495"/>
    </location>
</feature>
<feature type="sequence conflict" description="In Ref. 7; BAA23666." evidence="17" ref="7">
    <original>E</original>
    <variation>V</variation>
    <location>
        <position position="1700"/>
    </location>
</feature>
<feature type="sequence conflict" description="In Ref. 7; BAA23666." evidence="17" ref="7">
    <original>A</original>
    <variation>T</variation>
    <location>
        <position position="1822"/>
    </location>
</feature>
<sequence length="2025" mass="229869">MDNFAEGDFTVADYALLEDCPHVDDCVFAAEFMSNDYVRVTQLYCDGVGVQYKDYIQSERNLEFDICSIWCSKPISVLQDYCDAIKINIFWPLLFQHQNSSVISRLHPCVDANNSRASEINLKKLQHLELMEDIVDLAKKVANDSFLIGGLLRIGCKIENKILAMEEALNWIKYAGDVTILTKLGSIDNCWPMLSIFFTEYKYHITKIVMEDCNLLEELKTQSCMDCIEEGELMKMKGNEEFSKERFDIAIIYYTRAIEYRPENYLLYGNRALCFLRTGQFRNALGDGKRATILKNTWPKGHYRYCDALSMLGEYDWALQANIKAQKLCKNDPEGIKDLIQQHVKLQKQIEDLQGRTANKDPIKAFYENRAYTPRSLSAPIFTTSLNFVEKERDFRKINHEMANGGNQNLKVADEALKVDDCDCHPEFSPPSSQPPKHKGKQKSRNNESEKFSSSSPLTLPADLKNILEKQFSKSSRAAHQDFANIMKMLRSLIQDGYMALLEQRCRSAAQAFTELLNGLDPQKIKQLNLAMINYVLVVYGLAISLLGIGQPEELSEAENQFKRIIEHYPSEGLDCLAYCGIGKVYLKKNRFLEALNHFEKARTLIYRLPGVLTWPTSNVIIEESQPQKIKMLLEKFVEECKFPPVPDAICCYQKCHGYSKIQIYITDPDFKGFIRISCCQYCKIEFHMNCWKKLKTTTFNDKIDKDFLQGICLTPDCEGVISKIIIFSSGGEVKCEFEHKVIKEKVPPRPILKQKCSSLEKLRLKEDKKLKRKIQKKEAKKLAQERMEEDLRESNPPKNEEQKETVDNVQRCQFLDDRILQCIKQYADKIKSGIQNTAMLLKELLSWKVLSTEDYTTCFSSRNFLNEAVDYVIRHLIQENNRVKTRIFLHVLSELKEVEPKLAAWIQKLNSFGLDATGTFFSRYGASLKLLDFSIMTFLWNEKYGHKLDSIEGKQLDYFSEPASLKEARCLIWLLEEHRDKFPALHSALDEFFDIMDSRCTVLRKQDSGEAPFSSTKVKNKSKKKKPKDSKPMLVGSGTTSVTSNNEIITSSEDHSNRNSDSAGPFAVPDHLRQDVEEFEALYDQHSNEYVVRNKKLWDMNPKQKCSTLYDYFSQFLEEHGPLDMSNKMFSAEYEFFPEETRQILEKAGGLKPFLLGCPRFVVIDNCIALKKVASRLKKKRKKKNIKTKVEEISKAGEYVRVKLQLNPAAREFKPDVKSKPVSDSSSAPAFENVKPKPVSANSPKPACEDVKAKPVSDNSSRQVSEDGQPKGVSSNSPKPGSEDANYKRVSCNSPKPVLEDVKPTYWAQSHLVTGYCTYLPFQRFDITQTPPAYINVLPGLPQYTSIYTPLASLSPEYQLPRSVPVVPSFVANDRADKNAAAYFEGHHLNAENVAGHQIASETQILEGSLGISVKSHCSTGDAHTVLSESNRNDEHCGNSNNKCEVIPESTSAVTNIPHVQMVAIQVSWNIIHQEVNTEPYNPFEERQGEISRIEKEHQVLQDQLQEVYENYEQIKLKGLEETRDLEEKLKRHLEENKISKTELDWFLQDLEREIKKWQQEKKEIQERLKSLKKKIKKVSNASEMYTQKNDGKEKEHELHLDQSLEISNTLTNEKMKIEEYIKKGKEDYEESHQRAVAAEVSVLENWKESEVYKLQIMESQAEAFLKKLGLISRDPAAYPDMESDIRSWELFLSNVTKEIEKAKSQFEEQIKAIKNGSRLSELSKVQISELSFPACNTVHPELLPESSGDDGQGLVTSASDVTGNHAALHRDPSVFSAGDSPGEAPSALLPGPPPGQPEATQLTGPKRAGQAALSERSPVADRKQPVPPGRAARSSQSPKKPFNSIIEHLSVVFPCYNSTELAGFIKKVRSKNKNSLSGLSIDEIVQRVTEHILDEQKKKKPNPGKDKRTYEPSSATPVTRSSQGSPSVVVAPSPKTKGQKAEDVPVRIALGASSCEICHEVFKSKNVRVLKCGHKYHKGCFKQWLKGQSACPACQGRDLLTEESPSGRGWPSQNQELPSCSSR</sequence>
<reference key="1">
    <citation type="journal article" date="1996" name="DNA Res.">
        <title>Identification of a novel human gene containing the tetratricopeptide repeat domain from the Down syndrome region of chromosome 21.</title>
        <authorList>
            <person name="Ohira M."/>
            <person name="Ootsuyama A."/>
            <person name="Suzuki E."/>
            <person name="Ichikawa H."/>
            <person name="Seki N."/>
            <person name="Nagase T."/>
            <person name="Nomura N."/>
            <person name="Ohki M."/>
        </authorList>
    </citation>
    <scope>NUCLEOTIDE SEQUENCE [MRNA] (ISOFORM TPRDI)</scope>
    <scope>VARIANT HIS-1751</scope>
    <source>
        <tissue>Brain</tissue>
    </source>
</reference>
<reference key="2">
    <citation type="journal article" date="1996" name="J. Biochem.">
        <title>Identification and cloning of a novel cDNA belonging to tetratricopeptide repeat gene family from Down syndrome-critical region 21q22.2.</title>
        <authorList>
            <person name="Tsukahara F."/>
            <person name="Hattori M."/>
            <person name="Muraki T."/>
            <person name="Sakaki Y."/>
        </authorList>
    </citation>
    <scope>NUCLEOTIDE SEQUENCE [MRNA] (ISOFORMS TPRDI; TPRDII AND TPRDIII)</scope>
    <scope>VARIANT HIS-1751</scope>
    <source>
        <tissue>Fetal brain</tissue>
        <tissue>Placenta</tissue>
    </source>
</reference>
<reference key="3">
    <citation type="journal article" date="2000" name="Nature">
        <title>The DNA sequence of human chromosome 21.</title>
        <authorList>
            <person name="Hattori M."/>
            <person name="Fujiyama A."/>
            <person name="Taylor T.D."/>
            <person name="Watanabe H."/>
            <person name="Yada T."/>
            <person name="Park H.-S."/>
            <person name="Toyoda A."/>
            <person name="Ishii K."/>
            <person name="Totoki Y."/>
            <person name="Choi D.-K."/>
            <person name="Groner Y."/>
            <person name="Soeda E."/>
            <person name="Ohki M."/>
            <person name="Takagi T."/>
            <person name="Sakaki Y."/>
            <person name="Taudien S."/>
            <person name="Blechschmidt K."/>
            <person name="Polley A."/>
            <person name="Menzel U."/>
            <person name="Delabar J."/>
            <person name="Kumpf K."/>
            <person name="Lehmann R."/>
            <person name="Patterson D."/>
            <person name="Reichwald K."/>
            <person name="Rump A."/>
            <person name="Schillhabel M."/>
            <person name="Schudy A."/>
            <person name="Zimmermann W."/>
            <person name="Rosenthal A."/>
            <person name="Kudoh J."/>
            <person name="Shibuya K."/>
            <person name="Kawasaki K."/>
            <person name="Asakawa S."/>
            <person name="Shintani A."/>
            <person name="Sasaki T."/>
            <person name="Nagamine K."/>
            <person name="Mitsuyama S."/>
            <person name="Antonarakis S.E."/>
            <person name="Minoshima S."/>
            <person name="Shimizu N."/>
            <person name="Nordsiek G."/>
            <person name="Hornischer K."/>
            <person name="Brandt P."/>
            <person name="Scharfe M."/>
            <person name="Schoen O."/>
            <person name="Desario A."/>
            <person name="Reichelt J."/>
            <person name="Kauer G."/>
            <person name="Bloecker H."/>
            <person name="Ramser J."/>
            <person name="Beck A."/>
            <person name="Klages S."/>
            <person name="Hennig S."/>
            <person name="Riesselmann L."/>
            <person name="Dagand E."/>
            <person name="Wehrmeyer S."/>
            <person name="Borzym K."/>
            <person name="Gardiner K."/>
            <person name="Nizetic D."/>
            <person name="Francis F."/>
            <person name="Lehrach H."/>
            <person name="Reinhardt R."/>
            <person name="Yaspo M.-L."/>
        </authorList>
    </citation>
    <scope>NUCLEOTIDE SEQUENCE [LARGE SCALE GENOMIC DNA]</scope>
</reference>
<reference key="4">
    <citation type="submission" date="2005-09" db="EMBL/GenBank/DDBJ databases">
        <authorList>
            <person name="Mural R.J."/>
            <person name="Istrail S."/>
            <person name="Sutton G.G."/>
            <person name="Florea L."/>
            <person name="Halpern A.L."/>
            <person name="Mobarry C.M."/>
            <person name="Lippert R."/>
            <person name="Walenz B."/>
            <person name="Shatkay H."/>
            <person name="Dew I."/>
            <person name="Miller J.R."/>
            <person name="Flanigan M.J."/>
            <person name="Edwards N.J."/>
            <person name="Bolanos R."/>
            <person name="Fasulo D."/>
            <person name="Halldorsson B.V."/>
            <person name="Hannenhalli S."/>
            <person name="Turner R."/>
            <person name="Yooseph S."/>
            <person name="Lu F."/>
            <person name="Nusskern D.R."/>
            <person name="Shue B.C."/>
            <person name="Zheng X.H."/>
            <person name="Zhong F."/>
            <person name="Delcher A.L."/>
            <person name="Huson D.H."/>
            <person name="Kravitz S.A."/>
            <person name="Mouchard L."/>
            <person name="Reinert K."/>
            <person name="Remington K.A."/>
            <person name="Clark A.G."/>
            <person name="Waterman M.S."/>
            <person name="Eichler E.E."/>
            <person name="Adams M.D."/>
            <person name="Hunkapiller M.W."/>
            <person name="Myers E.W."/>
            <person name="Venter J.C."/>
        </authorList>
    </citation>
    <scope>NUCLEOTIDE SEQUENCE [LARGE SCALE GENOMIC DNA]</scope>
</reference>
<reference key="5">
    <citation type="journal article" date="2004" name="Genome Res.">
        <title>The status, quality, and expansion of the NIH full-length cDNA project: the Mammalian Gene Collection (MGC).</title>
        <authorList>
            <consortium name="The MGC Project Team"/>
        </authorList>
    </citation>
    <scope>NUCLEOTIDE SEQUENCE [LARGE SCALE MRNA] (ISOFORM TPRDI)</scope>
    <source>
        <tissue>Testis</tissue>
    </source>
</reference>
<reference key="6">
    <citation type="journal article" date="2004" name="Nat. Genet.">
        <title>Complete sequencing and characterization of 21,243 full-length human cDNAs.</title>
        <authorList>
            <person name="Ota T."/>
            <person name="Suzuki Y."/>
            <person name="Nishikawa T."/>
            <person name="Otsuki T."/>
            <person name="Sugiyama T."/>
            <person name="Irie R."/>
            <person name="Wakamatsu A."/>
            <person name="Hayashi K."/>
            <person name="Sato H."/>
            <person name="Nagai K."/>
            <person name="Kimura K."/>
            <person name="Makita H."/>
            <person name="Sekine M."/>
            <person name="Obayashi M."/>
            <person name="Nishi T."/>
            <person name="Shibahara T."/>
            <person name="Tanaka T."/>
            <person name="Ishii S."/>
            <person name="Yamamoto J."/>
            <person name="Saito K."/>
            <person name="Kawai Y."/>
            <person name="Isono Y."/>
            <person name="Nakamura Y."/>
            <person name="Nagahari K."/>
            <person name="Murakami K."/>
            <person name="Yasuda T."/>
            <person name="Iwayanagi T."/>
            <person name="Wagatsuma M."/>
            <person name="Shiratori A."/>
            <person name="Sudo H."/>
            <person name="Hosoiri T."/>
            <person name="Kaku Y."/>
            <person name="Kodaira H."/>
            <person name="Kondo H."/>
            <person name="Sugawara M."/>
            <person name="Takahashi M."/>
            <person name="Kanda K."/>
            <person name="Yokoi T."/>
            <person name="Furuya T."/>
            <person name="Kikkawa E."/>
            <person name="Omura Y."/>
            <person name="Abe K."/>
            <person name="Kamihara K."/>
            <person name="Katsuta N."/>
            <person name="Sato K."/>
            <person name="Tanikawa M."/>
            <person name="Yamazaki M."/>
            <person name="Ninomiya K."/>
            <person name="Ishibashi T."/>
            <person name="Yamashita H."/>
            <person name="Murakawa K."/>
            <person name="Fujimori K."/>
            <person name="Tanai H."/>
            <person name="Kimata M."/>
            <person name="Watanabe M."/>
            <person name="Hiraoka S."/>
            <person name="Chiba Y."/>
            <person name="Ishida S."/>
            <person name="Ono Y."/>
            <person name="Takiguchi S."/>
            <person name="Watanabe S."/>
            <person name="Yosida M."/>
            <person name="Hotuta T."/>
            <person name="Kusano J."/>
            <person name="Kanehori K."/>
            <person name="Takahashi-Fujii A."/>
            <person name="Hara H."/>
            <person name="Tanase T.-O."/>
            <person name="Nomura Y."/>
            <person name="Togiya S."/>
            <person name="Komai F."/>
            <person name="Hara R."/>
            <person name="Takeuchi K."/>
            <person name="Arita M."/>
            <person name="Imose N."/>
            <person name="Musashino K."/>
            <person name="Yuuki H."/>
            <person name="Oshima A."/>
            <person name="Sasaki N."/>
            <person name="Aotsuka S."/>
            <person name="Yoshikawa Y."/>
            <person name="Matsunawa H."/>
            <person name="Ichihara T."/>
            <person name="Shiohata N."/>
            <person name="Sano S."/>
            <person name="Moriya S."/>
            <person name="Momiyama H."/>
            <person name="Satoh N."/>
            <person name="Takami S."/>
            <person name="Terashima Y."/>
            <person name="Suzuki O."/>
            <person name="Nakagawa S."/>
            <person name="Senoh A."/>
            <person name="Mizoguchi H."/>
            <person name="Goto Y."/>
            <person name="Shimizu F."/>
            <person name="Wakebe H."/>
            <person name="Hishigaki H."/>
            <person name="Watanabe T."/>
            <person name="Sugiyama A."/>
            <person name="Takemoto M."/>
            <person name="Kawakami B."/>
            <person name="Yamazaki M."/>
            <person name="Watanabe K."/>
            <person name="Kumagai A."/>
            <person name="Itakura S."/>
            <person name="Fukuzumi Y."/>
            <person name="Fujimori Y."/>
            <person name="Komiyama M."/>
            <person name="Tashiro H."/>
            <person name="Tanigami A."/>
            <person name="Fujiwara T."/>
            <person name="Ono T."/>
            <person name="Yamada K."/>
            <person name="Fujii Y."/>
            <person name="Ozaki K."/>
            <person name="Hirao M."/>
            <person name="Ohmori Y."/>
            <person name="Kawabata A."/>
            <person name="Hikiji T."/>
            <person name="Kobatake N."/>
            <person name="Inagaki H."/>
            <person name="Ikema Y."/>
            <person name="Okamoto S."/>
            <person name="Okitani R."/>
            <person name="Kawakami T."/>
            <person name="Noguchi S."/>
            <person name="Itoh T."/>
            <person name="Shigeta K."/>
            <person name="Senba T."/>
            <person name="Matsumura K."/>
            <person name="Nakajima Y."/>
            <person name="Mizuno T."/>
            <person name="Morinaga M."/>
            <person name="Sasaki M."/>
            <person name="Togashi T."/>
            <person name="Oyama M."/>
            <person name="Hata H."/>
            <person name="Watanabe M."/>
            <person name="Komatsu T."/>
            <person name="Mizushima-Sugano J."/>
            <person name="Satoh T."/>
            <person name="Shirai Y."/>
            <person name="Takahashi Y."/>
            <person name="Nakagawa K."/>
            <person name="Okumura K."/>
            <person name="Nagase T."/>
            <person name="Nomura N."/>
            <person name="Kikuchi H."/>
            <person name="Masuho Y."/>
            <person name="Yamashita R."/>
            <person name="Nakai K."/>
            <person name="Yada T."/>
            <person name="Nakamura Y."/>
            <person name="Ohara O."/>
            <person name="Isogai T."/>
            <person name="Sugano S."/>
        </authorList>
    </citation>
    <scope>NUCLEOTIDE SEQUENCE [LARGE SCALE MRNA] OF 1-627 (ISOFORM TPRDI)</scope>
    <source>
        <tissue>Small intestine</tissue>
    </source>
</reference>
<reference key="7">
    <citation type="journal article" date="1997" name="DNA Seq.">
        <title>Cloning and characterization of novel gene, DCRR1, expressed from Down's syndrome critical region of human chromosome 21q22.2.</title>
        <authorList>
            <person name="Eki T."/>
            <person name="Abe M."/>
            <person name="Naitou M."/>
            <person name="Sasanuma S.I."/>
            <person name="Nohata J."/>
            <person name="Kawashima K."/>
            <person name="Ahmad I."/>
            <person name="Hanaoka F."/>
            <person name="Murakami Y."/>
        </authorList>
    </citation>
    <scope>NUCLEOTIDE SEQUENCE [MRNA] OF 85-2025 (ISOFORM TPRDI)</scope>
    <scope>VARIANT THR-840</scope>
</reference>
<reference key="8">
    <citation type="journal article" date="1998" name="Genomics">
        <title>Transcriptional map of the 2.5-Mb CBR-ERG region of chromosome 21 involved in Down syndrome.</title>
        <authorList>
            <person name="Dahmane N."/>
            <person name="Ait-Ghezala G."/>
            <person name="Gosset P."/>
            <person name="Chamoun Z."/>
            <person name="Dufresne-Zacharia M.-C."/>
            <person name="Lopes C."/>
            <person name="Rabatel N."/>
            <person name="Gassanova-Maugenre S."/>
            <person name="Chettouh Z."/>
            <person name="Abramowski V."/>
            <person name="Fayet E."/>
            <person name="Yaspo M.-L."/>
            <person name="Korn B."/>
            <person name="Blouin J.-L."/>
            <person name="Lehrach H."/>
            <person name="Poustka A."/>
            <person name="Antonarakis S.E."/>
            <person name="Sinet P.-M."/>
            <person name="Creau N."/>
            <person name="Delabar J.-M."/>
        </authorList>
    </citation>
    <scope>NUCLEOTIDE SEQUENCE [MRNA] OF 121-616 (ISOFORM TPRDI)</scope>
    <source>
        <tissue>Fetal brain</tissue>
    </source>
</reference>
<reference key="9">
    <citation type="journal article" date="2007" name="J. Cell Sci.">
        <title>The Down syndrome critical region protein TTC3 inhibits neuronal differentiation via RhoA and Citron kinase.</title>
        <authorList>
            <person name="Berto G."/>
            <person name="Camera P."/>
            <person name="Fusco C."/>
            <person name="Imarisio S."/>
            <person name="Ambrogio C."/>
            <person name="Chiarle R."/>
            <person name="Silengo L."/>
            <person name="Di Cunto F."/>
        </authorList>
    </citation>
    <scope>FUNCTION</scope>
    <scope>INTERACTION WITH CIT</scope>
</reference>
<reference key="10">
    <citation type="journal article" date="2009" name="Dev. Cell">
        <title>The E3 ligase TTC3 facilitates ubiquitination and degradation of phosphorylated Akt.</title>
        <authorList>
            <person name="Suizu F."/>
            <person name="Hiramuki Y."/>
            <person name="Okumura F."/>
            <person name="Matsuda M."/>
            <person name="Okumura A.J."/>
            <person name="Hirata N."/>
            <person name="Narita M."/>
            <person name="Kohno T."/>
            <person name="Yokota J."/>
            <person name="Bohgaki M."/>
            <person name="Obuse C."/>
            <person name="Hatakeyama S."/>
            <person name="Obata T."/>
            <person name="Noguchi M."/>
        </authorList>
    </citation>
    <scope>FUNCTION</scope>
    <scope>CATALYTIC ACTIVITY</scope>
    <scope>PATHWAY</scope>
    <scope>SUBCELLULAR LOCATION</scope>
    <scope>INTERACTION WITH AKT1; AKT2 AND AKT3</scope>
    <scope>PHOSPHORYLATION AT SER-378</scope>
    <scope>MUTAGENESIS OF SER-378</scope>
</reference>
<reference key="11">
    <citation type="journal article" date="2014" name="PLoS ONE">
        <title>The DCR protein TTC3 affects differentiation and Golgi compactness in neurons through specific actin-regulating pathways.</title>
        <authorList>
            <person name="Berto G.E."/>
            <person name="Iobbi C."/>
            <person name="Camera P."/>
            <person name="Scarpa E."/>
            <person name="Iampietro C."/>
            <person name="Bianchi F."/>
            <person name="Gai M."/>
            <person name="Sgro F."/>
            <person name="Cristofani F."/>
            <person name="Gaertner A."/>
            <person name="Dotti C.G."/>
            <person name="Di Cunto F."/>
        </authorList>
    </citation>
    <scope>FUNCTION</scope>
</reference>
<reference key="12">
    <citation type="journal article" date="2017" name="Oncotarget">
        <title>Tetratricopeptide repeat domain 3 overexpression tends to form aggregates and inhibit ubiquitination and degradation of DNA polymerase gamma.</title>
        <authorList>
            <person name="Gong Y."/>
            <person name="Wang X."/>
            <person name="Shang X."/>
            <person name="Xiao S.P."/>
            <person name="Li W."/>
            <person name="Shang Y."/>
            <person name="Dou F."/>
        </authorList>
    </citation>
    <scope>INTERACTION WITH POLG AND HSP70</scope>
</reference>
<reference key="13">
    <citation type="journal article" date="2019" name="Cell Death Dis.">
        <title>TTC3 contributes to TGF-beta1-induced epithelial-mesenchymal transition and myofibroblast differentiation, potentially through SMURF2 ubiquitylation and degradation.</title>
        <authorList>
            <person name="Kim J.H."/>
            <person name="Ham S."/>
            <person name="Lee Y."/>
            <person name="Suh G.Y."/>
            <person name="Lee Y.S."/>
        </authorList>
    </citation>
    <scope>FUNCTION</scope>
    <scope>CATALYTIC ACTIVITY</scope>
    <scope>PATHWAY</scope>
    <scope>INTERACTION WITH SMURF2</scope>
    <scope>INDUCTION BY TGFB1</scope>
</reference>
<reference key="14">
    <citation type="journal article" date="2019" name="NeuroMolecular Med.">
        <title>Overexpressed TTC3 Protein Tends to be Cleaved into Fragments and Form Aggregates in the Nucleus.</title>
        <authorList>
            <person name="Gong Y."/>
            <person name="Wang K."/>
            <person name="Xiao S.P."/>
            <person name="Mi P."/>
            <person name="Li W."/>
            <person name="Shang Y."/>
            <person name="Dou F."/>
        </authorList>
    </citation>
    <scope>FUNCTION</scope>
    <scope>SUBCELLULAR LOCATION</scope>
    <scope>PROTEOLYTIC CLEAVAGE</scope>
</reference>
<reference key="15">
    <citation type="journal article" date="2006" name="Science">
        <title>The consensus coding sequences of human breast and colorectal cancers.</title>
        <authorList>
            <person name="Sjoeblom T."/>
            <person name="Jones S."/>
            <person name="Wood L.D."/>
            <person name="Parsons D.W."/>
            <person name="Lin J."/>
            <person name="Barber T.D."/>
            <person name="Mandelker D."/>
            <person name="Leary R.J."/>
            <person name="Ptak J."/>
            <person name="Silliman N."/>
            <person name="Szabo S."/>
            <person name="Buckhaults P."/>
            <person name="Farrell C."/>
            <person name="Meeh P."/>
            <person name="Markowitz S.D."/>
            <person name="Willis J."/>
            <person name="Dawson D."/>
            <person name="Willson J.K.V."/>
            <person name="Gazdar A.F."/>
            <person name="Hartigan J."/>
            <person name="Wu L."/>
            <person name="Liu C."/>
            <person name="Parmigiani G."/>
            <person name="Park B.H."/>
            <person name="Bachman K.E."/>
            <person name="Papadopoulos N."/>
            <person name="Vogelstein B."/>
            <person name="Kinzler K.W."/>
            <person name="Velculescu V.E."/>
        </authorList>
    </citation>
    <scope>VARIANT [LARGE SCALE ANALYSIS] MET-1289</scope>
</reference>
<reference key="16">
    <citation type="journal article" date="2016" name="Neurol. Genet.">
        <title>Segregation of a rare TTC3 variant in an extended family with late-onset Alzheimer disease.</title>
        <authorList>
            <person name="Kohli M.A."/>
            <person name="Cukier H.N."/>
            <person name="Hamilton-Nelson K.L."/>
            <person name="Rolati S."/>
            <person name="Kunkle B.W."/>
            <person name="Whitehead P.L."/>
            <person name="Zuechner S.L."/>
            <person name="Farrer L.A."/>
            <person name="Martin E.R."/>
            <person name="Beecham G.W."/>
            <person name="Haines J.L."/>
            <person name="Vance J.M."/>
            <person name="Cuccaro M.L."/>
            <person name="Gilbert J.R."/>
            <person name="Schellenberg G.D."/>
            <person name="Carney R.M."/>
            <person name="Pericak-Vance M.A."/>
        </authorList>
    </citation>
    <scope>VARIANT CYS-1038</scope>
</reference>
<name>TTC3_HUMAN</name>
<gene>
    <name type="primary">TTC3</name>
    <name type="synonym">DCRR1</name>
    <name type="synonym">RNF105</name>
    <name type="synonym">TPRD</name>
</gene>
<keyword id="KW-0025">Alternative splicing</keyword>
<keyword id="KW-0963">Cytoplasm</keyword>
<keyword id="KW-0333">Golgi apparatus</keyword>
<keyword id="KW-0479">Metal-binding</keyword>
<keyword id="KW-0539">Nucleus</keyword>
<keyword id="KW-0597">Phosphoprotein</keyword>
<keyword id="KW-1267">Proteomics identification</keyword>
<keyword id="KW-1185">Reference proteome</keyword>
<keyword id="KW-0677">Repeat</keyword>
<keyword id="KW-0802">TPR repeat</keyword>
<keyword id="KW-0808">Transferase</keyword>
<keyword id="KW-0833">Ubl conjugation pathway</keyword>
<keyword id="KW-0862">Zinc</keyword>
<keyword id="KW-0863">Zinc-finger</keyword>